<sequence length="441" mass="47760">MPRARKGNTPRKGGQRRGGGARSSAQADSGSSEDEAASEARSTTSECPSLLSTTAEDSLGGDTVDEQGPQEDLEEKLKEYVDGLTDKSAKTRQGALESLRLALASRLLPDFLLERRFTLADALEKCLKKGKGEEQALAAAVLGLLCVQLGPGPKGEELFHSLQPLLLSVLSDSTASPAARLHCASALGLGCYVAAADVQDLVSCLACLEGVFSRSCGTGSSTSHVAPASLHGVCCAALQAWALLLTICPSAHISHILDRQLPRLPQLLSSESVNLRIAAGETIALLFELARDLEEDFVYEDMEALCSTLRTLATDSNKYRAKADRRRQRSTFRAVLHYVEGGECEEETVRFGLEVLYVDSWARHRVYTSFKEALGSGLHHHLQNNELLRDIFGLGPVLVLDATALKACKISRFEKHLYNAAAFKARTKARSRVRDKRADIL</sequence>
<keyword id="KW-0002">3D-structure</keyword>
<keyword id="KW-1185">Reference proteome</keyword>
<keyword id="KW-0810">Translation regulation</keyword>
<proteinExistence type="evidence at protein level"/>
<reference key="1">
    <citation type="journal article" date="2011" name="Nature">
        <title>A high-resolution map of human evolutionary constraint using 29 mammals.</title>
        <authorList>
            <person name="Lindblad-Toh K."/>
            <person name="Garber M."/>
            <person name="Zuk O."/>
            <person name="Lin M.F."/>
            <person name="Parker B.J."/>
            <person name="Washietl S."/>
            <person name="Kheradpour P."/>
            <person name="Ernst J."/>
            <person name="Jordan G."/>
            <person name="Mauceli E."/>
            <person name="Ward L.D."/>
            <person name="Lowe C.B."/>
            <person name="Holloway A.K."/>
            <person name="Clamp M."/>
            <person name="Gnerre S."/>
            <person name="Alfoldi J."/>
            <person name="Beal K."/>
            <person name="Chang J."/>
            <person name="Clawson H."/>
            <person name="Cuff J."/>
            <person name="Di Palma F."/>
            <person name="Fitzgerald S."/>
            <person name="Flicek P."/>
            <person name="Guttman M."/>
            <person name="Hubisz M.J."/>
            <person name="Jaffe D.B."/>
            <person name="Jungreis I."/>
            <person name="Kent W.J."/>
            <person name="Kostka D."/>
            <person name="Lara M."/>
            <person name="Martins A.L."/>
            <person name="Massingham T."/>
            <person name="Moltke I."/>
            <person name="Raney B.J."/>
            <person name="Rasmussen M.D."/>
            <person name="Robinson J."/>
            <person name="Stark A."/>
            <person name="Vilella A.J."/>
            <person name="Wen J."/>
            <person name="Xie X."/>
            <person name="Zody M.C."/>
            <person name="Baldwin J."/>
            <person name="Bloom T."/>
            <person name="Chin C.W."/>
            <person name="Heiman D."/>
            <person name="Nicol R."/>
            <person name="Nusbaum C."/>
            <person name="Young S."/>
            <person name="Wilkinson J."/>
            <person name="Worley K.C."/>
            <person name="Kovar C.L."/>
            <person name="Muzny D.M."/>
            <person name="Gibbs R.A."/>
            <person name="Cree A."/>
            <person name="Dihn H.H."/>
            <person name="Fowler G."/>
            <person name="Jhangiani S."/>
            <person name="Joshi V."/>
            <person name="Lee S."/>
            <person name="Lewis L.R."/>
            <person name="Nazareth L.V."/>
            <person name="Okwuonu G."/>
            <person name="Santibanez J."/>
            <person name="Warren W.C."/>
            <person name="Mardis E.R."/>
            <person name="Weinstock G.M."/>
            <person name="Wilson R.K."/>
            <person name="Delehaunty K."/>
            <person name="Dooling D."/>
            <person name="Fronik C."/>
            <person name="Fulton L."/>
            <person name="Fulton B."/>
            <person name="Graves T."/>
            <person name="Minx P."/>
            <person name="Sodergren E."/>
            <person name="Birney E."/>
            <person name="Margulies E.H."/>
            <person name="Herrero J."/>
            <person name="Green E.D."/>
            <person name="Haussler D."/>
            <person name="Siepel A."/>
            <person name="Goldman N."/>
            <person name="Pollard K.S."/>
            <person name="Pedersen J.S."/>
            <person name="Lander E.S."/>
            <person name="Kellis M."/>
        </authorList>
    </citation>
    <scope>NUCLEOTIDE SEQUENCE [LARGE SCALE GENOMIC DNA]</scope>
    <source>
        <strain>Thorbecke</strain>
    </source>
</reference>
<reference evidence="5" key="2">
    <citation type="journal article" date="2018" name="Elife">
        <title>Structures of translationally inactive mammalian ribosomes.</title>
        <authorList>
            <person name="Brown A."/>
            <person name="Baird M.R."/>
            <person name="Yip M.C."/>
            <person name="Murray J."/>
            <person name="Shao S."/>
        </authorList>
    </citation>
    <scope>STRUCTURE BY ELECTRON MICROSCOPY (3.30 ANGSTROMS) IN COMPLEX WITH RIBOSOME</scope>
    <scope>FUNCTION</scope>
    <scope>RIBOSOME-BINDING</scope>
</reference>
<name>IFRD2_RABIT</name>
<protein>
    <recommendedName>
        <fullName evidence="4">Interferon-related developmental regulator 2</fullName>
    </recommendedName>
</protein>
<gene>
    <name evidence="3" type="primary">IFRD2</name>
</gene>
<comment type="function">
    <text evidence="2">Ribosome-binding protein that acts as an inhibitor of mRNA translation by promoting ribosome inactivation (PubMed:30355441). Associates with the P- and E-sites of the ribosome and inserts a C-terminal helix into the mRNA exit channel to preclude translation (PubMed:30355441).</text>
</comment>
<comment type="subunit">
    <text evidence="2">Associates with ribosomes; promoting ribosome inactivation.</text>
</comment>
<comment type="similarity">
    <text evidence="4">Belongs to the IFRD family.</text>
</comment>
<dbReference type="EMBL" id="VIYN02002998">
    <property type="status" value="NOT_ANNOTATED_CDS"/>
    <property type="molecule type" value="Genomic_DNA"/>
</dbReference>
<dbReference type="RefSeq" id="XP_002713258.3">
    <property type="nucleotide sequence ID" value="XM_002713212.5"/>
</dbReference>
<dbReference type="PDB" id="6MTC">
    <property type="method" value="EM"/>
    <property type="resolution" value="3.40 A"/>
    <property type="chains" value="v=1-441"/>
</dbReference>
<dbReference type="PDBsum" id="6MTC"/>
<dbReference type="SMR" id="P0DX19"/>
<dbReference type="GeneID" id="100339814"/>
<dbReference type="KEGG" id="ocu:100339814"/>
<dbReference type="CTD" id="7866"/>
<dbReference type="OrthoDB" id="18978at2759"/>
<dbReference type="Proteomes" id="UP000001811">
    <property type="component" value="Unplaced"/>
</dbReference>
<dbReference type="GO" id="GO:0043022">
    <property type="term" value="F:ribosome binding"/>
    <property type="evidence" value="ECO:0000314"/>
    <property type="project" value="UniProtKB"/>
</dbReference>
<dbReference type="GO" id="GO:0030371">
    <property type="term" value="F:translation repressor activity"/>
    <property type="evidence" value="ECO:0000314"/>
    <property type="project" value="UniProtKB"/>
</dbReference>
<dbReference type="GO" id="GO:0017148">
    <property type="term" value="P:negative regulation of translation"/>
    <property type="evidence" value="ECO:0000314"/>
    <property type="project" value="UniProtKB"/>
</dbReference>
<dbReference type="FunFam" id="1.25.10.10:FF:000192">
    <property type="entry name" value="Interferon related developmental regulator 1"/>
    <property type="match status" value="1"/>
</dbReference>
<dbReference type="Gene3D" id="1.25.10.10">
    <property type="entry name" value="Leucine-rich Repeat Variant"/>
    <property type="match status" value="1"/>
</dbReference>
<dbReference type="InterPro" id="IPR011989">
    <property type="entry name" value="ARM-like"/>
</dbReference>
<dbReference type="InterPro" id="IPR016024">
    <property type="entry name" value="ARM-type_fold"/>
</dbReference>
<dbReference type="InterPro" id="IPR039777">
    <property type="entry name" value="IFRD"/>
</dbReference>
<dbReference type="InterPro" id="IPR006921">
    <property type="entry name" value="Interferon-rel_develop_reg_C"/>
</dbReference>
<dbReference type="InterPro" id="IPR007701">
    <property type="entry name" value="Interferon-rel_develop_reg_N"/>
</dbReference>
<dbReference type="PANTHER" id="PTHR12354">
    <property type="entry name" value="INTERFERON-RELATED DEVELOPMENTAL REGULATOR"/>
    <property type="match status" value="1"/>
</dbReference>
<dbReference type="PANTHER" id="PTHR12354:SF8">
    <property type="entry name" value="INTERFERON-RELATED DEVELOPMENTAL REGULATOR 2"/>
    <property type="match status" value="1"/>
</dbReference>
<dbReference type="Pfam" id="PF05004">
    <property type="entry name" value="IFRD"/>
    <property type="match status" value="1"/>
</dbReference>
<dbReference type="Pfam" id="PF04836">
    <property type="entry name" value="IFRD_C"/>
    <property type="match status" value="1"/>
</dbReference>
<dbReference type="SUPFAM" id="SSF48371">
    <property type="entry name" value="ARM repeat"/>
    <property type="match status" value="1"/>
</dbReference>
<organism>
    <name type="scientific">Oryctolagus cuniculus</name>
    <name type="common">Rabbit</name>
    <dbReference type="NCBI Taxonomy" id="9986"/>
    <lineage>
        <taxon>Eukaryota</taxon>
        <taxon>Metazoa</taxon>
        <taxon>Chordata</taxon>
        <taxon>Craniata</taxon>
        <taxon>Vertebrata</taxon>
        <taxon>Euteleostomi</taxon>
        <taxon>Mammalia</taxon>
        <taxon>Eutheria</taxon>
        <taxon>Euarchontoglires</taxon>
        <taxon>Glires</taxon>
        <taxon>Lagomorpha</taxon>
        <taxon>Leporidae</taxon>
        <taxon>Oryctolagus</taxon>
    </lineage>
</organism>
<accession>P0DX19</accession>
<evidence type="ECO:0000256" key="1">
    <source>
        <dbReference type="SAM" id="MobiDB-lite"/>
    </source>
</evidence>
<evidence type="ECO:0000269" key="2">
    <source>
    </source>
</evidence>
<evidence type="ECO:0000303" key="3">
    <source>
    </source>
</evidence>
<evidence type="ECO:0000305" key="4"/>
<evidence type="ECO:0007744" key="5">
    <source>
        <dbReference type="PDB" id="6MTC"/>
    </source>
</evidence>
<feature type="chain" id="PRO_0000458236" description="Interferon-related developmental regulator 2">
    <location>
        <begin position="1"/>
        <end position="441"/>
    </location>
</feature>
<feature type="region of interest" description="Disordered" evidence="1">
    <location>
        <begin position="1"/>
        <end position="72"/>
    </location>
</feature>
<feature type="compositionally biased region" description="Basic residues" evidence="1">
    <location>
        <begin position="1"/>
        <end position="15"/>
    </location>
</feature>
<feature type="compositionally biased region" description="Acidic residues" evidence="1">
    <location>
        <begin position="63"/>
        <end position="72"/>
    </location>
</feature>